<accession>Q8GAA6</accession>
<accession>Q31R32</accession>
<protein>
    <recommendedName>
        <fullName evidence="1">Queuine tRNA-ribosyltransferase</fullName>
        <ecNumber evidence="1">2.4.2.29</ecNumber>
    </recommendedName>
    <alternativeName>
        <fullName evidence="1">Guanine insertion enzyme</fullName>
    </alternativeName>
    <alternativeName>
        <fullName evidence="1">tRNA-guanine transglycosylase</fullName>
    </alternativeName>
</protein>
<dbReference type="EC" id="2.4.2.29" evidence="1"/>
<dbReference type="EMBL" id="X04616">
    <property type="protein sequence ID" value="CAD55621.1"/>
    <property type="status" value="ALT_INIT"/>
    <property type="molecule type" value="Genomic_DNA"/>
</dbReference>
<dbReference type="EMBL" id="CP000100">
    <property type="protein sequence ID" value="ABB56487.1"/>
    <property type="molecule type" value="Genomic_DNA"/>
</dbReference>
<dbReference type="RefSeq" id="WP_011377585.1">
    <property type="nucleotide sequence ID" value="NZ_JACJTX010000002.1"/>
</dbReference>
<dbReference type="SMR" id="Q8GAA6"/>
<dbReference type="STRING" id="1140.Synpcc7942_0455"/>
<dbReference type="PaxDb" id="1140-Synpcc7942_0455"/>
<dbReference type="GeneID" id="72429277"/>
<dbReference type="KEGG" id="syf:Synpcc7942_0455"/>
<dbReference type="eggNOG" id="COG0343">
    <property type="taxonomic scope" value="Bacteria"/>
</dbReference>
<dbReference type="HOGENOM" id="CLU_022060_0_1_3"/>
<dbReference type="OrthoDB" id="9805417at2"/>
<dbReference type="BioCyc" id="SYNEL:SYNPCC7942_0455-MONOMER"/>
<dbReference type="UniPathway" id="UPA00392"/>
<dbReference type="Proteomes" id="UP000889800">
    <property type="component" value="Chromosome"/>
</dbReference>
<dbReference type="GO" id="GO:0005829">
    <property type="term" value="C:cytosol"/>
    <property type="evidence" value="ECO:0007669"/>
    <property type="project" value="TreeGrafter"/>
</dbReference>
<dbReference type="GO" id="GO:0046872">
    <property type="term" value="F:metal ion binding"/>
    <property type="evidence" value="ECO:0007669"/>
    <property type="project" value="UniProtKB-KW"/>
</dbReference>
<dbReference type="GO" id="GO:0008479">
    <property type="term" value="F:tRNA-guanosine(34) queuine transglycosylase activity"/>
    <property type="evidence" value="ECO:0007669"/>
    <property type="project" value="UniProtKB-UniRule"/>
</dbReference>
<dbReference type="GO" id="GO:0008616">
    <property type="term" value="P:queuosine biosynthetic process"/>
    <property type="evidence" value="ECO:0007669"/>
    <property type="project" value="UniProtKB-UniRule"/>
</dbReference>
<dbReference type="GO" id="GO:0002099">
    <property type="term" value="P:tRNA wobble guanine modification"/>
    <property type="evidence" value="ECO:0007669"/>
    <property type="project" value="TreeGrafter"/>
</dbReference>
<dbReference type="GO" id="GO:0101030">
    <property type="term" value="P:tRNA-guanine transglycosylation"/>
    <property type="evidence" value="ECO:0007669"/>
    <property type="project" value="InterPro"/>
</dbReference>
<dbReference type="FunFam" id="3.20.20.105:FF:000001">
    <property type="entry name" value="Queuine tRNA-ribosyltransferase"/>
    <property type="match status" value="1"/>
</dbReference>
<dbReference type="Gene3D" id="3.20.20.105">
    <property type="entry name" value="Queuine tRNA-ribosyltransferase-like"/>
    <property type="match status" value="1"/>
</dbReference>
<dbReference type="HAMAP" id="MF_00168">
    <property type="entry name" value="Q_tRNA_Tgt"/>
    <property type="match status" value="1"/>
</dbReference>
<dbReference type="InterPro" id="IPR050076">
    <property type="entry name" value="ArchSynthase1/Queuine_TRR"/>
</dbReference>
<dbReference type="InterPro" id="IPR004803">
    <property type="entry name" value="TGT"/>
</dbReference>
<dbReference type="InterPro" id="IPR036511">
    <property type="entry name" value="TGT-like_sf"/>
</dbReference>
<dbReference type="InterPro" id="IPR002616">
    <property type="entry name" value="tRNA_ribo_trans-like"/>
</dbReference>
<dbReference type="NCBIfam" id="TIGR00430">
    <property type="entry name" value="Q_tRNA_tgt"/>
    <property type="match status" value="1"/>
</dbReference>
<dbReference type="NCBIfam" id="TIGR00449">
    <property type="entry name" value="tgt_general"/>
    <property type="match status" value="1"/>
</dbReference>
<dbReference type="PANTHER" id="PTHR46499">
    <property type="entry name" value="QUEUINE TRNA-RIBOSYLTRANSFERASE"/>
    <property type="match status" value="1"/>
</dbReference>
<dbReference type="PANTHER" id="PTHR46499:SF1">
    <property type="entry name" value="QUEUINE TRNA-RIBOSYLTRANSFERASE"/>
    <property type="match status" value="1"/>
</dbReference>
<dbReference type="Pfam" id="PF01702">
    <property type="entry name" value="TGT"/>
    <property type="match status" value="1"/>
</dbReference>
<dbReference type="SUPFAM" id="SSF51713">
    <property type="entry name" value="tRNA-guanine transglycosylase"/>
    <property type="match status" value="1"/>
</dbReference>
<organism>
    <name type="scientific">Synechococcus elongatus (strain ATCC 33912 / PCC 7942 / FACHB-805)</name>
    <name type="common">Anacystis nidulans R2</name>
    <dbReference type="NCBI Taxonomy" id="1140"/>
    <lineage>
        <taxon>Bacteria</taxon>
        <taxon>Bacillati</taxon>
        <taxon>Cyanobacteriota</taxon>
        <taxon>Cyanophyceae</taxon>
        <taxon>Synechococcales</taxon>
        <taxon>Synechococcaceae</taxon>
        <taxon>Synechococcus</taxon>
    </lineage>
</organism>
<reference key="1">
    <citation type="submission" date="2002-07" db="EMBL/GenBank/DDBJ databases">
        <title>Synechococcus elongatus PCC 7942 cosmid 3E9.</title>
        <authorList>
            <person name="Holtman C.K."/>
            <person name="Sandoval P."/>
            <person name="Chen Y."/>
            <person name="Socias T."/>
            <person name="Mohler B.J."/>
            <person name="McMurtry S."/>
            <person name="Gonzalez A."/>
            <person name="Salinas I."/>
            <person name="Golden S.S."/>
            <person name="Youderian P."/>
        </authorList>
    </citation>
    <scope>NUCLEOTIDE SEQUENCE [GENOMIC DNA]</scope>
</reference>
<reference key="2">
    <citation type="submission" date="2005-08" db="EMBL/GenBank/DDBJ databases">
        <title>Complete sequence of chromosome 1 of Synechococcus elongatus PCC 7942.</title>
        <authorList>
            <consortium name="US DOE Joint Genome Institute"/>
            <person name="Copeland A."/>
            <person name="Lucas S."/>
            <person name="Lapidus A."/>
            <person name="Barry K."/>
            <person name="Detter J.C."/>
            <person name="Glavina T."/>
            <person name="Hammon N."/>
            <person name="Israni S."/>
            <person name="Pitluck S."/>
            <person name="Schmutz J."/>
            <person name="Larimer F."/>
            <person name="Land M."/>
            <person name="Kyrpides N."/>
            <person name="Lykidis A."/>
            <person name="Golden S."/>
            <person name="Richardson P."/>
        </authorList>
    </citation>
    <scope>NUCLEOTIDE SEQUENCE [LARGE SCALE GENOMIC DNA]</scope>
    <source>
        <strain>ATCC 33912 / PCC 7942 / FACHB-805</strain>
    </source>
</reference>
<name>TGT_SYNE7</name>
<proteinExistence type="inferred from homology"/>
<keyword id="KW-0328">Glycosyltransferase</keyword>
<keyword id="KW-0479">Metal-binding</keyword>
<keyword id="KW-0671">Queuosine biosynthesis</keyword>
<keyword id="KW-1185">Reference proteome</keyword>
<keyword id="KW-0808">Transferase</keyword>
<keyword id="KW-0819">tRNA processing</keyword>
<keyword id="KW-0862">Zinc</keyword>
<comment type="function">
    <text evidence="1">Catalyzes the base-exchange of a guanine (G) residue with the queuine precursor 7-aminomethyl-7-deazaguanine (PreQ1) at position 34 (anticodon wobble position) in tRNAs with GU(N) anticodons (tRNA-Asp, -Asn, -His and -Tyr). Catalysis occurs through a double-displacement mechanism. The nucleophile active site attacks the C1' of nucleotide 34 to detach the guanine base from the RNA, forming a covalent enzyme-RNA intermediate. The proton acceptor active site deprotonates the incoming PreQ1, allowing a nucleophilic attack on the C1' of the ribose to form the product. After dissociation, two additional enzymatic reactions on the tRNA convert PreQ1 to queuine (Q), resulting in the hypermodified nucleoside queuosine (7-(((4,5-cis-dihydroxy-2-cyclopenten-1-yl)amino)methyl)-7-deazaguanosine).</text>
</comment>
<comment type="catalytic activity">
    <reaction evidence="1">
        <text>7-aminomethyl-7-carbaguanine + guanosine(34) in tRNA = 7-aminomethyl-7-carbaguanosine(34) in tRNA + guanine</text>
        <dbReference type="Rhea" id="RHEA:24104"/>
        <dbReference type="Rhea" id="RHEA-COMP:10341"/>
        <dbReference type="Rhea" id="RHEA-COMP:10342"/>
        <dbReference type="ChEBI" id="CHEBI:16235"/>
        <dbReference type="ChEBI" id="CHEBI:58703"/>
        <dbReference type="ChEBI" id="CHEBI:74269"/>
        <dbReference type="ChEBI" id="CHEBI:82833"/>
        <dbReference type="EC" id="2.4.2.29"/>
    </reaction>
</comment>
<comment type="cofactor">
    <cofactor evidence="1">
        <name>Zn(2+)</name>
        <dbReference type="ChEBI" id="CHEBI:29105"/>
    </cofactor>
    <text evidence="1">Binds 1 zinc ion per subunit.</text>
</comment>
<comment type="pathway">
    <text evidence="1">tRNA modification; tRNA-queuosine biosynthesis.</text>
</comment>
<comment type="subunit">
    <text evidence="1">Homodimer. Within each dimer, one monomer is responsible for RNA recognition and catalysis, while the other monomer binds to the replacement base PreQ1.</text>
</comment>
<comment type="similarity">
    <text evidence="1">Belongs to the queuine tRNA-ribosyltransferase family.</text>
</comment>
<comment type="sequence caution" evidence="2">
    <conflict type="erroneous initiation">
        <sequence resource="EMBL-CDS" id="CAD55621"/>
    </conflict>
</comment>
<gene>
    <name evidence="1" type="primary">tgt</name>
    <name type="ordered locus">Synpcc7942_0455</name>
    <name type="ORF">sel0015</name>
</gene>
<sequence>MDRQCAVASLTAFQFQIDRQCSQTRGRACSFHTPHGIVETPRFMPVGTLATVKTVTPAQLRDTGAQMVLSNTYHLHLQPGEEIVAKAGGLHRFMNWSGPMLTDSGGFQVFSLSELRKIEERGVTFRSPRDGAVIEFTPERSIRIQNALGADVIMAFDECPPYPAERKDVEAAVARTYRWLERCINAHERPQDQALFGIVQGGVYLDLRQQAARDLVQLDLPGYAIGGVSVGEPSEEIHRIVEATAPLLPAHKPRYLMGVGTYREMVQAIAAGIDLFDCVIPTRLARHGAALVKGDRWNLKNAQFREDFQPLDEDCNCYCCQNFSRAYLNHLIRSREILGYTLLSIHNITELVRFTTRIREAILSDRFVEEFGHWLQPSAVPVSP</sequence>
<evidence type="ECO:0000255" key="1">
    <source>
        <dbReference type="HAMAP-Rule" id="MF_00168"/>
    </source>
</evidence>
<evidence type="ECO:0000305" key="2"/>
<feature type="chain" id="PRO_0000135542" description="Queuine tRNA-ribosyltransferase">
    <location>
        <begin position="1"/>
        <end position="384"/>
    </location>
</feature>
<feature type="region of interest" description="RNA binding" evidence="1">
    <location>
        <begin position="258"/>
        <end position="264"/>
    </location>
</feature>
<feature type="region of interest" description="RNA binding; important for wobble base 34 recognition" evidence="1">
    <location>
        <begin position="282"/>
        <end position="286"/>
    </location>
</feature>
<feature type="active site" description="Proton acceptor" evidence="1">
    <location>
        <position position="103"/>
    </location>
</feature>
<feature type="active site" description="Nucleophile" evidence="1">
    <location>
        <position position="277"/>
    </location>
</feature>
<feature type="binding site" evidence="1">
    <location>
        <begin position="103"/>
        <end position="107"/>
    </location>
    <ligand>
        <name>substrate</name>
    </ligand>
</feature>
<feature type="binding site" evidence="1">
    <location>
        <position position="157"/>
    </location>
    <ligand>
        <name>substrate</name>
    </ligand>
</feature>
<feature type="binding site" evidence="1">
    <location>
        <position position="200"/>
    </location>
    <ligand>
        <name>substrate</name>
    </ligand>
</feature>
<feature type="binding site" evidence="1">
    <location>
        <position position="227"/>
    </location>
    <ligand>
        <name>substrate</name>
    </ligand>
</feature>
<feature type="binding site" evidence="1">
    <location>
        <position position="315"/>
    </location>
    <ligand>
        <name>Zn(2+)</name>
        <dbReference type="ChEBI" id="CHEBI:29105"/>
    </ligand>
</feature>
<feature type="binding site" evidence="1">
    <location>
        <position position="317"/>
    </location>
    <ligand>
        <name>Zn(2+)</name>
        <dbReference type="ChEBI" id="CHEBI:29105"/>
    </ligand>
</feature>
<feature type="binding site" evidence="1">
    <location>
        <position position="320"/>
    </location>
    <ligand>
        <name>Zn(2+)</name>
        <dbReference type="ChEBI" id="CHEBI:29105"/>
    </ligand>
</feature>
<feature type="binding site" evidence="1">
    <location>
        <position position="346"/>
    </location>
    <ligand>
        <name>Zn(2+)</name>
        <dbReference type="ChEBI" id="CHEBI:29105"/>
    </ligand>
</feature>